<evidence type="ECO:0000250" key="1"/>
<evidence type="ECO:0000255" key="2">
    <source>
        <dbReference type="PROSITE-ProRule" id="PRU01007"/>
    </source>
</evidence>
<evidence type="ECO:0000269" key="3">
    <source>
    </source>
</evidence>
<evidence type="ECO:0000303" key="4">
    <source>
    </source>
</evidence>
<evidence type="ECO:0000305" key="5"/>
<evidence type="ECO:0007829" key="6">
    <source>
        <dbReference type="PDB" id="5JK5"/>
    </source>
</evidence>
<evidence type="ECO:0007829" key="7">
    <source>
        <dbReference type="PDB" id="5JK6"/>
    </source>
</evidence>
<reference key="1">
    <citation type="journal article" date="2005" name="Nature">
        <title>The genome of the social amoeba Dictyostelium discoideum.</title>
        <authorList>
            <person name="Eichinger L."/>
            <person name="Pachebat J.A."/>
            <person name="Gloeckner G."/>
            <person name="Rajandream M.A."/>
            <person name="Sucgang R."/>
            <person name="Berriman M."/>
            <person name="Song J."/>
            <person name="Olsen R."/>
            <person name="Szafranski K."/>
            <person name="Xu Q."/>
            <person name="Tunggal B."/>
            <person name="Kummerfeld S."/>
            <person name="Madera M."/>
            <person name="Konfortov B.A."/>
            <person name="Rivero F."/>
            <person name="Bankier A.T."/>
            <person name="Lehmann R."/>
            <person name="Hamlin N."/>
            <person name="Davies R."/>
            <person name="Gaudet P."/>
            <person name="Fey P."/>
            <person name="Pilcher K."/>
            <person name="Chen G."/>
            <person name="Saunders D."/>
            <person name="Sodergren E.J."/>
            <person name="Davis P."/>
            <person name="Kerhornou A."/>
            <person name="Nie X."/>
            <person name="Hall N."/>
            <person name="Anjard C."/>
            <person name="Hemphill L."/>
            <person name="Bason N."/>
            <person name="Farbrother P."/>
            <person name="Desany B."/>
            <person name="Just E."/>
            <person name="Morio T."/>
            <person name="Rost R."/>
            <person name="Churcher C.M."/>
            <person name="Cooper J."/>
            <person name="Haydock S."/>
            <person name="van Driessche N."/>
            <person name="Cronin A."/>
            <person name="Goodhead I."/>
            <person name="Muzny D.M."/>
            <person name="Mourier T."/>
            <person name="Pain A."/>
            <person name="Lu M."/>
            <person name="Harper D."/>
            <person name="Lindsay R."/>
            <person name="Hauser H."/>
            <person name="James K.D."/>
            <person name="Quiles M."/>
            <person name="Madan Babu M."/>
            <person name="Saito T."/>
            <person name="Buchrieser C."/>
            <person name="Wardroper A."/>
            <person name="Felder M."/>
            <person name="Thangavelu M."/>
            <person name="Johnson D."/>
            <person name="Knights A."/>
            <person name="Loulseged H."/>
            <person name="Mungall K.L."/>
            <person name="Oliver K."/>
            <person name="Price C."/>
            <person name="Quail M.A."/>
            <person name="Urushihara H."/>
            <person name="Hernandez J."/>
            <person name="Rabbinowitsch E."/>
            <person name="Steffen D."/>
            <person name="Sanders M."/>
            <person name="Ma J."/>
            <person name="Kohara Y."/>
            <person name="Sharp S."/>
            <person name="Simmonds M.N."/>
            <person name="Spiegler S."/>
            <person name="Tivey A."/>
            <person name="Sugano S."/>
            <person name="White B."/>
            <person name="Walker D."/>
            <person name="Woodward J.R."/>
            <person name="Winckler T."/>
            <person name="Tanaka Y."/>
            <person name="Shaulsky G."/>
            <person name="Schleicher M."/>
            <person name="Weinstock G.M."/>
            <person name="Rosenthal A."/>
            <person name="Cox E.C."/>
            <person name="Chisholm R.L."/>
            <person name="Gibbs R.A."/>
            <person name="Loomis W.F."/>
            <person name="Platzer M."/>
            <person name="Kay R.R."/>
            <person name="Williams J.G."/>
            <person name="Dear P.H."/>
            <person name="Noegel A.A."/>
            <person name="Barrell B.G."/>
            <person name="Kuspa A."/>
        </authorList>
    </citation>
    <scope>NUCLEOTIDE SEQUENCE [LARGE SCALE GENOMIC DNA]</scope>
    <source>
        <strain>AX4</strain>
    </source>
</reference>
<reference key="2">
    <citation type="journal article" date="2008" name="Gene">
        <title>The phylogeny of the aromatic amino acid hydroxylases revisited by characterizing phenylalanine hydroxylase from Dictyostelium discoideum.</title>
        <authorList>
            <person name="Siltberg-Liberles J."/>
            <person name="Steen I.H."/>
            <person name="Svebak R.M."/>
            <person name="Martinez A."/>
        </authorList>
    </citation>
    <scope>FUNCTION</scope>
    <scope>CATALYTIC ACTIVITY</scope>
    <scope>BIOPHYSICOCHEMICAL PROPERTIES</scope>
    <scope>SUBUNIT</scope>
</reference>
<name>PH4H_DICDI</name>
<feature type="chain" id="PRO_0000328336" description="Phenylalanine-4-hydroxylase">
    <location>
        <begin position="1"/>
        <end position="441"/>
    </location>
</feature>
<feature type="domain" description="ACT" evidence="2">
    <location>
        <begin position="23"/>
        <end position="102"/>
    </location>
</feature>
<feature type="binding site" evidence="1">
    <location>
        <position position="273"/>
    </location>
    <ligand>
        <name>Fe cation</name>
        <dbReference type="ChEBI" id="CHEBI:24875"/>
    </ligand>
</feature>
<feature type="binding site" evidence="1">
    <location>
        <position position="278"/>
    </location>
    <ligand>
        <name>Fe cation</name>
        <dbReference type="ChEBI" id="CHEBI:24875"/>
    </ligand>
</feature>
<feature type="binding site" evidence="1">
    <location>
        <position position="318"/>
    </location>
    <ligand>
        <name>Fe cation</name>
        <dbReference type="ChEBI" id="CHEBI:24875"/>
    </ligand>
</feature>
<feature type="strand" evidence="6">
    <location>
        <begin position="17"/>
        <end position="26"/>
    </location>
</feature>
<feature type="helix" evidence="6">
    <location>
        <begin position="32"/>
        <end position="45"/>
    </location>
</feature>
<feature type="strand" evidence="6">
    <location>
        <begin position="49"/>
        <end position="56"/>
    </location>
</feature>
<feature type="strand" evidence="6">
    <location>
        <begin position="63"/>
        <end position="74"/>
    </location>
</feature>
<feature type="helix" evidence="6">
    <location>
        <begin position="79"/>
        <end position="88"/>
    </location>
</feature>
<feature type="turn" evidence="6">
    <location>
        <begin position="89"/>
        <end position="91"/>
    </location>
</feature>
<feature type="strand" evidence="6">
    <location>
        <begin position="95"/>
        <end position="98"/>
    </location>
</feature>
<feature type="strand" evidence="6">
    <location>
        <begin position="104"/>
        <end position="107"/>
    </location>
</feature>
<feature type="helix" evidence="6">
    <location>
        <begin position="113"/>
        <end position="119"/>
    </location>
</feature>
<feature type="strand" evidence="6">
    <location>
        <begin position="125"/>
        <end position="129"/>
    </location>
</feature>
<feature type="turn" evidence="6">
    <location>
        <begin position="135"/>
        <end position="138"/>
    </location>
</feature>
<feature type="helix" evidence="6">
    <location>
        <begin position="140"/>
        <end position="155"/>
    </location>
</feature>
<feature type="helix" evidence="6">
    <location>
        <begin position="169"/>
        <end position="183"/>
    </location>
</feature>
<feature type="helix" evidence="6">
    <location>
        <begin position="186"/>
        <end position="189"/>
    </location>
</feature>
<feature type="helix" evidence="6">
    <location>
        <begin position="192"/>
        <end position="204"/>
    </location>
</feature>
<feature type="helix" evidence="6">
    <location>
        <begin position="215"/>
        <end position="226"/>
    </location>
</feature>
<feature type="strand" evidence="6">
    <location>
        <begin position="229"/>
        <end position="232"/>
    </location>
</feature>
<feature type="strand" evidence="7">
    <location>
        <begin position="234"/>
        <end position="236"/>
    </location>
</feature>
<feature type="helix" evidence="6">
    <location>
        <begin position="239"/>
        <end position="246"/>
    </location>
</feature>
<feature type="turn" evidence="6">
    <location>
        <begin position="247"/>
        <end position="249"/>
    </location>
</feature>
<feature type="strand" evidence="6">
    <location>
        <begin position="250"/>
        <end position="253"/>
    </location>
</feature>
<feature type="helix" evidence="6">
    <location>
        <begin position="271"/>
        <end position="277"/>
    </location>
</feature>
<feature type="helix" evidence="6">
    <location>
        <begin position="279"/>
        <end position="282"/>
    </location>
</feature>
<feature type="helix" evidence="6">
    <location>
        <begin position="285"/>
        <end position="298"/>
    </location>
</feature>
<feature type="helix" evidence="6">
    <location>
        <begin position="303"/>
        <end position="314"/>
    </location>
</feature>
<feature type="turn" evidence="6">
    <location>
        <begin position="315"/>
        <end position="319"/>
    </location>
</feature>
<feature type="strand" evidence="6">
    <location>
        <begin position="321"/>
        <end position="324"/>
    </location>
</feature>
<feature type="strand" evidence="6">
    <location>
        <begin position="327"/>
        <end position="330"/>
    </location>
</feature>
<feature type="helix" evidence="6">
    <location>
        <begin position="333"/>
        <end position="336"/>
    </location>
</feature>
<feature type="helix" evidence="6">
    <location>
        <begin position="339"/>
        <end position="345"/>
    </location>
</feature>
<feature type="strand" evidence="6">
    <location>
        <begin position="350"/>
        <end position="354"/>
    </location>
</feature>
<feature type="helix" evidence="6">
    <location>
        <begin position="357"/>
        <end position="360"/>
    </location>
</feature>
<feature type="strand" evidence="6">
    <location>
        <begin position="367"/>
        <end position="369"/>
    </location>
</feature>
<feature type="strand" evidence="6">
    <location>
        <begin position="372"/>
        <end position="378"/>
    </location>
</feature>
<feature type="helix" evidence="6">
    <location>
        <begin position="380"/>
        <end position="393"/>
    </location>
</feature>
<feature type="strand" evidence="6">
    <location>
        <begin position="397"/>
        <end position="403"/>
    </location>
</feature>
<feature type="turn" evidence="6">
    <location>
        <begin position="404"/>
        <end position="407"/>
    </location>
</feature>
<feature type="strand" evidence="6">
    <location>
        <begin position="408"/>
        <end position="413"/>
    </location>
</feature>
<dbReference type="EC" id="1.14.16.1" evidence="3"/>
<dbReference type="EC" id="1.14.16.4" evidence="3"/>
<dbReference type="EMBL" id="AAFI02000024">
    <property type="protein sequence ID" value="EAL67992.1"/>
    <property type="molecule type" value="Genomic_DNA"/>
</dbReference>
<dbReference type="RefSeq" id="XP_641959.1">
    <property type="nucleotide sequence ID" value="XM_636867.1"/>
</dbReference>
<dbReference type="PDB" id="5JK5">
    <property type="method" value="X-ray"/>
    <property type="resolution" value="2.07 A"/>
    <property type="chains" value="A/B=1-415"/>
</dbReference>
<dbReference type="PDB" id="5JK6">
    <property type="method" value="X-ray"/>
    <property type="resolution" value="2.07 A"/>
    <property type="chains" value="A/B=1-415"/>
</dbReference>
<dbReference type="PDB" id="5JK8">
    <property type="method" value="X-ray"/>
    <property type="resolution" value="2.39 A"/>
    <property type="chains" value="A/B=1-415"/>
</dbReference>
<dbReference type="PDBsum" id="5JK5"/>
<dbReference type="PDBsum" id="5JK6"/>
<dbReference type="PDBsum" id="5JK8"/>
<dbReference type="SMR" id="Q54XS1"/>
<dbReference type="FunCoup" id="Q54XS1">
    <property type="interactions" value="60"/>
</dbReference>
<dbReference type="MINT" id="Q54XS1"/>
<dbReference type="STRING" id="44689.Q54XS1"/>
<dbReference type="PaxDb" id="44689-DDB0231664"/>
<dbReference type="EnsemblProtists" id="EAL67992">
    <property type="protein sequence ID" value="EAL67992"/>
    <property type="gene ID" value="DDB_G0278781"/>
</dbReference>
<dbReference type="GeneID" id="8621691"/>
<dbReference type="KEGG" id="ddi:DDB_G0278781"/>
<dbReference type="dictyBase" id="DDB_G0278781">
    <property type="gene designation" value="pah"/>
</dbReference>
<dbReference type="VEuPathDB" id="AmoebaDB:DDB_G0278781"/>
<dbReference type="eggNOG" id="KOG3820">
    <property type="taxonomic scope" value="Eukaryota"/>
</dbReference>
<dbReference type="HOGENOM" id="CLU_023198_0_1_1"/>
<dbReference type="InParanoid" id="Q54XS1"/>
<dbReference type="OMA" id="FHDEVYR"/>
<dbReference type="PhylomeDB" id="Q54XS1"/>
<dbReference type="Reactome" id="R-DDI-209905">
    <property type="pathway name" value="Catecholamine biosynthesis"/>
</dbReference>
<dbReference type="Reactome" id="R-DDI-209931">
    <property type="pathway name" value="Serotonin and melatonin biosynthesis"/>
</dbReference>
<dbReference type="Reactome" id="R-DDI-8964208">
    <property type="pathway name" value="Phenylalanine metabolism"/>
</dbReference>
<dbReference type="SABIO-RK" id="Q54XS1"/>
<dbReference type="UniPathway" id="UPA00139">
    <property type="reaction ID" value="UER00337"/>
</dbReference>
<dbReference type="PRO" id="PR:Q54XS1"/>
<dbReference type="Proteomes" id="UP000002195">
    <property type="component" value="Chromosome 3"/>
</dbReference>
<dbReference type="GO" id="GO:0042802">
    <property type="term" value="F:identical protein binding"/>
    <property type="evidence" value="ECO:0000353"/>
    <property type="project" value="IntAct"/>
</dbReference>
<dbReference type="GO" id="GO:0005506">
    <property type="term" value="F:iron ion binding"/>
    <property type="evidence" value="ECO:0007669"/>
    <property type="project" value="InterPro"/>
</dbReference>
<dbReference type="GO" id="GO:0004505">
    <property type="term" value="F:phenylalanine 4-monooxygenase activity"/>
    <property type="evidence" value="ECO:0000314"/>
    <property type="project" value="dictyBase"/>
</dbReference>
<dbReference type="GO" id="GO:0004664">
    <property type="term" value="F:prephenate dehydratase activity"/>
    <property type="evidence" value="ECO:0007669"/>
    <property type="project" value="InterPro"/>
</dbReference>
<dbReference type="GO" id="GO:0034617">
    <property type="term" value="F:tetrahydrobiopterin binding"/>
    <property type="evidence" value="ECO:0000314"/>
    <property type="project" value="dictyBase"/>
</dbReference>
<dbReference type="GO" id="GO:0004510">
    <property type="term" value="F:tryptophan 5-monooxygenase activity"/>
    <property type="evidence" value="ECO:0007669"/>
    <property type="project" value="UniProtKB-EC"/>
</dbReference>
<dbReference type="GO" id="GO:0019954">
    <property type="term" value="P:asexual reproduction"/>
    <property type="evidence" value="ECO:0000315"/>
    <property type="project" value="dictyBase"/>
</dbReference>
<dbReference type="GO" id="GO:0009094">
    <property type="term" value="P:L-phenylalanine biosynthetic process"/>
    <property type="evidence" value="ECO:0007669"/>
    <property type="project" value="InterPro"/>
</dbReference>
<dbReference type="GO" id="GO:0006559">
    <property type="term" value="P:L-phenylalanine catabolic process"/>
    <property type="evidence" value="ECO:0000314"/>
    <property type="project" value="dictyBase"/>
</dbReference>
<dbReference type="GO" id="GO:0006571">
    <property type="term" value="P:tyrosine biosynthetic process"/>
    <property type="evidence" value="ECO:0000314"/>
    <property type="project" value="dictyBase"/>
</dbReference>
<dbReference type="CDD" id="cd04880">
    <property type="entry name" value="ACT_AAAH-PDT-like"/>
    <property type="match status" value="1"/>
</dbReference>
<dbReference type="CDD" id="cd03347">
    <property type="entry name" value="eu_PheOH"/>
    <property type="match status" value="1"/>
</dbReference>
<dbReference type="FunFam" id="1.10.800.10:FF:000004">
    <property type="entry name" value="Tyrosine 3-monooxygenase"/>
    <property type="match status" value="1"/>
</dbReference>
<dbReference type="Gene3D" id="1.10.800.10">
    <property type="entry name" value="Aromatic amino acid hydroxylase"/>
    <property type="match status" value="1"/>
</dbReference>
<dbReference type="InterPro" id="IPR045865">
    <property type="entry name" value="ACT-like_dom_sf"/>
</dbReference>
<dbReference type="InterPro" id="IPR002912">
    <property type="entry name" value="ACT_dom"/>
</dbReference>
<dbReference type="InterPro" id="IPR001273">
    <property type="entry name" value="ArAA_hydroxylase"/>
</dbReference>
<dbReference type="InterPro" id="IPR018301">
    <property type="entry name" value="ArAA_hydroxylase_Fe/CU_BS"/>
</dbReference>
<dbReference type="InterPro" id="IPR036951">
    <property type="entry name" value="ArAA_hydroxylase_sf"/>
</dbReference>
<dbReference type="InterPro" id="IPR036329">
    <property type="entry name" value="Aro-AA_hydroxylase_C_sf"/>
</dbReference>
<dbReference type="InterPro" id="IPR019774">
    <property type="entry name" value="Aromatic-AA_hydroxylase_C"/>
</dbReference>
<dbReference type="InterPro" id="IPR041912">
    <property type="entry name" value="Euk_PheOH_cat"/>
</dbReference>
<dbReference type="InterPro" id="IPR018528">
    <property type="entry name" value="Preph_deHydtase_CS"/>
</dbReference>
<dbReference type="InterPro" id="IPR019773">
    <property type="entry name" value="Tyrosine_3-monooxygenase-like"/>
</dbReference>
<dbReference type="PANTHER" id="PTHR11473">
    <property type="entry name" value="AROMATIC AMINO ACID HYDROXYLASE"/>
    <property type="match status" value="1"/>
</dbReference>
<dbReference type="PANTHER" id="PTHR11473:SF24">
    <property type="entry name" value="PHENYLALANINE-4-HYDROXYLASE"/>
    <property type="match status" value="1"/>
</dbReference>
<dbReference type="Pfam" id="PF00351">
    <property type="entry name" value="Biopterin_H"/>
    <property type="match status" value="1"/>
</dbReference>
<dbReference type="PIRSF" id="PIRSF000336">
    <property type="entry name" value="TH"/>
    <property type="match status" value="1"/>
</dbReference>
<dbReference type="PRINTS" id="PR00372">
    <property type="entry name" value="FYWHYDRXLASE"/>
</dbReference>
<dbReference type="SUPFAM" id="SSF55021">
    <property type="entry name" value="ACT-like"/>
    <property type="match status" value="1"/>
</dbReference>
<dbReference type="SUPFAM" id="SSF56534">
    <property type="entry name" value="Aromatic aminoacid monoxygenases, catalytic and oligomerization domains"/>
    <property type="match status" value="1"/>
</dbReference>
<dbReference type="PROSITE" id="PS51671">
    <property type="entry name" value="ACT"/>
    <property type="match status" value="1"/>
</dbReference>
<dbReference type="PROSITE" id="PS00367">
    <property type="entry name" value="BH4_AAA_HYDROXYL_1"/>
    <property type="match status" value="1"/>
</dbReference>
<dbReference type="PROSITE" id="PS51410">
    <property type="entry name" value="BH4_AAA_HYDROXYL_2"/>
    <property type="match status" value="1"/>
</dbReference>
<comment type="function">
    <text evidence="3">Catalyzes the hydroxylation of L-phenylalanine (PubMed:18835579). Hydroxylates L-tryptophan to 5-hydroxy-L-tryptophan but does not hydroxylate L-tyrosine to L-DOPA (PubMed:18835579). It uses D-threo-tetrahydrodictyopterin (DH4), also known as dictyoperin, as a cofactor.</text>
</comment>
<comment type="catalytic activity">
    <reaction evidence="3">
        <text>(6R)-L-erythro-5,6,7,8-tetrahydrobiopterin + L-phenylalanine + O2 = (4aS,6R)-4a-hydroxy-L-erythro-5,6,7,8-tetrahydrobiopterin + L-tyrosine</text>
        <dbReference type="Rhea" id="RHEA:20273"/>
        <dbReference type="ChEBI" id="CHEBI:15379"/>
        <dbReference type="ChEBI" id="CHEBI:15642"/>
        <dbReference type="ChEBI" id="CHEBI:58095"/>
        <dbReference type="ChEBI" id="CHEBI:58315"/>
        <dbReference type="ChEBI" id="CHEBI:59560"/>
        <dbReference type="EC" id="1.14.16.1"/>
    </reaction>
    <physiologicalReaction direction="left-to-right" evidence="3">
        <dbReference type="Rhea" id="RHEA:20274"/>
    </physiologicalReaction>
</comment>
<comment type="catalytic activity">
    <reaction evidence="3">
        <text>(6R)-L-erythro-5,6,7,8-tetrahydrobiopterin + L-tryptophan + O2 = 5-hydroxy-L-tryptophan + (4aS,6R)-4a-hydroxy-L-erythro-5,6,7,8-tetrahydrobiopterin</text>
        <dbReference type="Rhea" id="RHEA:16709"/>
        <dbReference type="ChEBI" id="CHEBI:15379"/>
        <dbReference type="ChEBI" id="CHEBI:15642"/>
        <dbReference type="ChEBI" id="CHEBI:57912"/>
        <dbReference type="ChEBI" id="CHEBI:58266"/>
        <dbReference type="ChEBI" id="CHEBI:59560"/>
        <dbReference type="EC" id="1.14.16.4"/>
    </reaction>
    <physiologicalReaction direction="left-to-right" evidence="3">
        <dbReference type="Rhea" id="RHEA:16710"/>
    </physiologicalReaction>
</comment>
<comment type="cofactor">
    <cofactor evidence="1">
        <name>Fe(2+)</name>
        <dbReference type="ChEBI" id="CHEBI:29033"/>
    </cofactor>
    <text evidence="1">Binds 1 Fe(2+) ion.</text>
</comment>
<comment type="biophysicochemical properties">
    <kinetics>
        <KM evidence="3">620 uM for L-Phe with BH(4) as cofactor</KM>
        <KM evidence="3">90 uM for L-Phe with DH(4) as cofactor</KM>
        <KM evidence="3">49 uM for BH(4)</KM>
        <KM evidence="3">39 uM for DH(4)</KM>
        <Vmax evidence="3">660.0 nmol/min/mg enzyme with BH(4) as cofactor (preincubated with L-Phe)</Vmax>
        <Vmax evidence="3">840.0 nmol/min/mg enzyme with DH(4) as cofactor (preincubated with L-Phe)</Vmax>
        <Vmax evidence="3">1620.0 nmol/min/mg enzyme with BH(4) as cofactor (preincubated with BH(4))</Vmax>
        <Vmax evidence="3">1890.0 nmol/min/mg enzyme with DH(4) as cofactor (preincubated with DH(4))</Vmax>
    </kinetics>
    <temperatureDependence>
        <text evidence="3">Optimum temperature is 40 degrees Celsius (in vitro, with the purified enzyme).</text>
    </temperatureDependence>
</comment>
<comment type="pathway">
    <text>Amino-acid degradation; L-phenylalanine degradation; acetoacetate and fumarate from L-phenylalanine: step 1/6.</text>
</comment>
<comment type="subunit">
    <text evidence="3">Homotetramer.</text>
</comment>
<comment type="interaction">
    <interactant intactId="EBI-8067766">
        <id>Q54XS1</id>
    </interactant>
    <interactant intactId="EBI-8067766">
        <id>Q54XS1</id>
        <label>pah</label>
    </interactant>
    <organismsDiffer>false</organismsDiffer>
    <experiments>4</experiments>
</comment>
<comment type="miscellaneous">
    <text>This enzyme uses tetrahydrodictyopterin (DH4), a D-threo isomer of biopterin, and not tetrahydrobiopterin (TH4) for it's catalytic activity.</text>
</comment>
<comment type="similarity">
    <text evidence="5">Belongs to the biopterin-dependent aromatic amino acid hydroxylase family.</text>
</comment>
<gene>
    <name type="primary">pah</name>
    <name type="ORF">DDB_G0278781</name>
</gene>
<organism>
    <name type="scientific">Dictyostelium discoideum</name>
    <name type="common">Social amoeba</name>
    <dbReference type="NCBI Taxonomy" id="44689"/>
    <lineage>
        <taxon>Eukaryota</taxon>
        <taxon>Amoebozoa</taxon>
        <taxon>Evosea</taxon>
        <taxon>Eumycetozoa</taxon>
        <taxon>Dictyostelia</taxon>
        <taxon>Dictyosteliales</taxon>
        <taxon>Dictyosteliaceae</taxon>
        <taxon>Dictyostelium</taxon>
    </lineage>
</organism>
<protein>
    <recommendedName>
        <fullName>Phenylalanine-4-hydroxylase</fullName>
        <shortName evidence="4">PAH</shortName>
        <ecNumber evidence="3">1.14.16.1</ecNumber>
    </recommendedName>
    <alternativeName>
        <fullName>Phe-4-monooxygenase</fullName>
    </alternativeName>
    <alternativeName>
        <fullName>Tryptophan 5-hydroxylase</fullName>
        <shortName>TRH</shortName>
        <ecNumber evidence="3">1.14.16.4</ecNumber>
    </alternativeName>
    <alternativeName>
        <fullName>Tryptophan 5-monooxygenase</fullName>
    </alternativeName>
</protein>
<accession>Q54XS1</accession>
<proteinExistence type="evidence at protein level"/>
<keyword id="KW-0002">3D-structure</keyword>
<keyword id="KW-0408">Iron</keyword>
<keyword id="KW-0479">Metal-binding</keyword>
<keyword id="KW-0503">Monooxygenase</keyword>
<keyword id="KW-0560">Oxidoreductase</keyword>
<keyword id="KW-0585">Phenylalanine catabolism</keyword>
<keyword id="KW-1185">Reference proteome</keyword>
<sequence>MESNTNSQGQGIIPQSYHSSIFFSISKGSDKIGGLLEYLEIIKKHNINITRIESRPSKTEKKDYDFFLDLEYPTENNKEVEKVIKDLEEKGVKATTLQESSNQTYAPWFPRKISDLDLFANKVLEMGSDLTSDHPGASDPVYRERRREIAKIASTYKHGDEIPRIDYTEEEIKTWGVVYNRLKELFPTNACHQHAYIFPLLEQNCGYSPDNIPQLQDISNFLQECTGWRIRPVQGLLSARDFLNGLAFRVFHATQYIRHPSVPLYTPEPDCCHELLGHVPLLADPDFADFSQEIGLASIGASDEDIQLLSTCYWFTVEFGLCKEGDTIRAYGAGILSSTGEMEHFLTDKAKKLPFNPFDACNTEYPITTFQPLYYVAESFQKAKEQMRQFADSFKKPFSIRYNPYTQSIEILDNKDKLLNICNDIRNQSEILADAISKLKA</sequence>